<protein>
    <recommendedName>
        <fullName evidence="1">tRNA uridine(34) hydroxylase</fullName>
        <ecNumber evidence="1">1.14.-.-</ecNumber>
    </recommendedName>
    <alternativeName>
        <fullName evidence="1">tRNA hydroxylation protein O</fullName>
    </alternativeName>
</protein>
<keyword id="KW-0560">Oxidoreductase</keyword>
<keyword id="KW-0819">tRNA processing</keyword>
<comment type="function">
    <text evidence="1">Catalyzes oxygen-dependent 5-hydroxyuridine (ho5U) modification at position 34 in tRNAs.</text>
</comment>
<comment type="catalytic activity">
    <reaction evidence="1">
        <text>uridine(34) in tRNA + AH2 + O2 = 5-hydroxyuridine(34) in tRNA + A + H2O</text>
        <dbReference type="Rhea" id="RHEA:64224"/>
        <dbReference type="Rhea" id="RHEA-COMP:11727"/>
        <dbReference type="Rhea" id="RHEA-COMP:13381"/>
        <dbReference type="ChEBI" id="CHEBI:13193"/>
        <dbReference type="ChEBI" id="CHEBI:15377"/>
        <dbReference type="ChEBI" id="CHEBI:15379"/>
        <dbReference type="ChEBI" id="CHEBI:17499"/>
        <dbReference type="ChEBI" id="CHEBI:65315"/>
        <dbReference type="ChEBI" id="CHEBI:136877"/>
    </reaction>
</comment>
<comment type="similarity">
    <text evidence="1">Belongs to the TrhO family.</text>
</comment>
<dbReference type="EC" id="1.14.-.-" evidence="1"/>
<dbReference type="EMBL" id="CP000323">
    <property type="protein sequence ID" value="ABE74194.1"/>
    <property type="molecule type" value="Genomic_DNA"/>
</dbReference>
<dbReference type="RefSeq" id="WP_011512779.1">
    <property type="nucleotide sequence ID" value="NC_007969.1"/>
</dbReference>
<dbReference type="SMR" id="Q1QDQ9"/>
<dbReference type="STRING" id="335284.Pcryo_0411"/>
<dbReference type="KEGG" id="pcr:Pcryo_0411"/>
<dbReference type="eggNOG" id="COG1054">
    <property type="taxonomic scope" value="Bacteria"/>
</dbReference>
<dbReference type="HOGENOM" id="CLU_038878_0_0_6"/>
<dbReference type="Proteomes" id="UP000002425">
    <property type="component" value="Chromosome"/>
</dbReference>
<dbReference type="GO" id="GO:0016705">
    <property type="term" value="F:oxidoreductase activity, acting on paired donors, with incorporation or reduction of molecular oxygen"/>
    <property type="evidence" value="ECO:0007669"/>
    <property type="project" value="UniProtKB-UniRule"/>
</dbReference>
<dbReference type="GO" id="GO:0006400">
    <property type="term" value="P:tRNA modification"/>
    <property type="evidence" value="ECO:0007669"/>
    <property type="project" value="UniProtKB-UniRule"/>
</dbReference>
<dbReference type="CDD" id="cd01518">
    <property type="entry name" value="RHOD_YceA"/>
    <property type="match status" value="1"/>
</dbReference>
<dbReference type="Gene3D" id="3.30.70.100">
    <property type="match status" value="1"/>
</dbReference>
<dbReference type="Gene3D" id="3.40.250.10">
    <property type="entry name" value="Rhodanese-like domain"/>
    <property type="match status" value="1"/>
</dbReference>
<dbReference type="HAMAP" id="MF_00469">
    <property type="entry name" value="TrhO"/>
    <property type="match status" value="1"/>
</dbReference>
<dbReference type="InterPro" id="IPR001763">
    <property type="entry name" value="Rhodanese-like_dom"/>
</dbReference>
<dbReference type="InterPro" id="IPR036873">
    <property type="entry name" value="Rhodanese-like_dom_sf"/>
</dbReference>
<dbReference type="InterPro" id="IPR020936">
    <property type="entry name" value="TrhO"/>
</dbReference>
<dbReference type="InterPro" id="IPR040503">
    <property type="entry name" value="TRHO_N"/>
</dbReference>
<dbReference type="NCBIfam" id="NF001136">
    <property type="entry name" value="PRK00142.1-4"/>
    <property type="match status" value="1"/>
</dbReference>
<dbReference type="PANTHER" id="PTHR43268:SF3">
    <property type="entry name" value="RHODANESE-LIKE DOMAIN-CONTAINING PROTEIN 7-RELATED"/>
    <property type="match status" value="1"/>
</dbReference>
<dbReference type="PANTHER" id="PTHR43268">
    <property type="entry name" value="THIOSULFATE SULFURTRANSFERASE/RHODANESE-LIKE DOMAIN-CONTAINING PROTEIN 2"/>
    <property type="match status" value="1"/>
</dbReference>
<dbReference type="Pfam" id="PF00581">
    <property type="entry name" value="Rhodanese"/>
    <property type="match status" value="1"/>
</dbReference>
<dbReference type="Pfam" id="PF17773">
    <property type="entry name" value="UPF0176_N"/>
    <property type="match status" value="1"/>
</dbReference>
<dbReference type="SMART" id="SM00450">
    <property type="entry name" value="RHOD"/>
    <property type="match status" value="1"/>
</dbReference>
<dbReference type="SUPFAM" id="SSF52821">
    <property type="entry name" value="Rhodanese/Cell cycle control phosphatase"/>
    <property type="match status" value="1"/>
</dbReference>
<dbReference type="PROSITE" id="PS50206">
    <property type="entry name" value="RHODANESE_3"/>
    <property type="match status" value="1"/>
</dbReference>
<gene>
    <name evidence="1" type="primary">trhO</name>
    <name type="ordered locus">Pcryo_0411</name>
</gene>
<evidence type="ECO:0000255" key="1">
    <source>
        <dbReference type="HAMAP-Rule" id="MF_00469"/>
    </source>
</evidence>
<feature type="chain" id="PRO_0000242936" description="tRNA uridine(34) hydroxylase">
    <location>
        <begin position="1"/>
        <end position="352"/>
    </location>
</feature>
<feature type="domain" description="Rhodanese" evidence="1">
    <location>
        <begin position="144"/>
        <end position="238"/>
    </location>
</feature>
<feature type="active site" description="Cysteine persulfide intermediate" evidence="1">
    <location>
        <position position="198"/>
    </location>
</feature>
<reference key="1">
    <citation type="submission" date="2006-03" db="EMBL/GenBank/DDBJ databases">
        <title>Complete sequence of chromosome of Psychrobacter cryohalolentis K5.</title>
        <authorList>
            <consortium name="US DOE Joint Genome Institute"/>
            <person name="Copeland A."/>
            <person name="Lucas S."/>
            <person name="Lapidus A."/>
            <person name="Barry K."/>
            <person name="Detter J.C."/>
            <person name="Glavina T."/>
            <person name="Hammon N."/>
            <person name="Israni S."/>
            <person name="Dalin E."/>
            <person name="Tice H."/>
            <person name="Pitluck S."/>
            <person name="Brettin T."/>
            <person name="Bruce D."/>
            <person name="Han C."/>
            <person name="Tapia R."/>
            <person name="Sims D.R."/>
            <person name="Gilna P."/>
            <person name="Schmutz J."/>
            <person name="Larimer F."/>
            <person name="Land M."/>
            <person name="Hauser L."/>
            <person name="Kyrpides N."/>
            <person name="Kim E."/>
            <person name="Richardson P."/>
        </authorList>
    </citation>
    <scope>NUCLEOTIDE SEQUENCE [LARGE SCALE GENOMIC DNA]</scope>
    <source>
        <strain>ATCC BAA-1226 / DSM 17306 / VKM B-2378 / K5</strain>
    </source>
</reference>
<accession>Q1QDQ9</accession>
<organism>
    <name type="scientific">Psychrobacter cryohalolentis (strain ATCC BAA-1226 / DSM 17306 / VKM B-2378 / K5)</name>
    <dbReference type="NCBI Taxonomy" id="335284"/>
    <lineage>
        <taxon>Bacteria</taxon>
        <taxon>Pseudomonadati</taxon>
        <taxon>Pseudomonadota</taxon>
        <taxon>Gammaproteobacteria</taxon>
        <taxon>Moraxellales</taxon>
        <taxon>Moraxellaceae</taxon>
        <taxon>Psychrobacter</taxon>
    </lineage>
</organism>
<proteinExistence type="inferred from homology"/>
<sequence length="352" mass="39842">MSTSQTDNVKASTHATEYDSVTNNIVVAALYKFTRFADFEKYRDPILNTMLDNDVKGTLLIASEGINGTISGTRQGIDNVLDYLRSIEEIGSFTFKESYTDAQPFYRTKVKLKKEIVTMGVENIDPLQSVGRYVKPSDWNALISDPDVILIDTRNDYEVKIGTFQNAVNPNTETFREFPEYVAKELDPSKHKKVAMFCTGGIRCEKSTAFMREQGFEEVYHLEGGILKYLEEVPASDSMWEGDCFVFDNRVSVNHNLEKGSYEQCFACRMPITQAEMQSPAYIKGESCPHCIDKATDEQKARFREREHQMQLAQKRGEAHIGSDVIDVIEKRKAAKIEARRQADAANKTKAG</sequence>
<name>TRHO_PSYCK</name>